<name>HTPX_STUS1</name>
<reference key="1">
    <citation type="journal article" date="2008" name="Proc. Natl. Acad. Sci. U.S.A.">
        <title>Nitrogen fixation island and rhizosphere competence traits in the genome of root-associated Pseudomonas stutzeri A1501.</title>
        <authorList>
            <person name="Yan Y."/>
            <person name="Yang J."/>
            <person name="Dou Y."/>
            <person name="Chen M."/>
            <person name="Ping S."/>
            <person name="Peng J."/>
            <person name="Lu W."/>
            <person name="Zhang W."/>
            <person name="Yao Z."/>
            <person name="Li H."/>
            <person name="Liu W."/>
            <person name="He S."/>
            <person name="Geng L."/>
            <person name="Zhang X."/>
            <person name="Yang F."/>
            <person name="Yu H."/>
            <person name="Zhan Y."/>
            <person name="Li D."/>
            <person name="Lin Z."/>
            <person name="Wang Y."/>
            <person name="Elmerich C."/>
            <person name="Lin M."/>
            <person name="Jin Q."/>
        </authorList>
    </citation>
    <scope>NUCLEOTIDE SEQUENCE [LARGE SCALE GENOMIC DNA]</scope>
    <source>
        <strain>A1501</strain>
    </source>
</reference>
<keyword id="KW-0997">Cell inner membrane</keyword>
<keyword id="KW-1003">Cell membrane</keyword>
<keyword id="KW-0378">Hydrolase</keyword>
<keyword id="KW-0472">Membrane</keyword>
<keyword id="KW-0479">Metal-binding</keyword>
<keyword id="KW-0482">Metalloprotease</keyword>
<keyword id="KW-0645">Protease</keyword>
<keyword id="KW-1185">Reference proteome</keyword>
<keyword id="KW-0346">Stress response</keyword>
<keyword id="KW-0812">Transmembrane</keyword>
<keyword id="KW-1133">Transmembrane helix</keyword>
<keyword id="KW-0862">Zinc</keyword>
<evidence type="ECO:0000255" key="1">
    <source>
        <dbReference type="HAMAP-Rule" id="MF_00188"/>
    </source>
</evidence>
<organism>
    <name type="scientific">Stutzerimonas stutzeri (strain A1501)</name>
    <name type="common">Pseudomonas stutzeri</name>
    <dbReference type="NCBI Taxonomy" id="379731"/>
    <lineage>
        <taxon>Bacteria</taxon>
        <taxon>Pseudomonadati</taxon>
        <taxon>Pseudomonadota</taxon>
        <taxon>Gammaproteobacteria</taxon>
        <taxon>Pseudomonadales</taxon>
        <taxon>Pseudomonadaceae</taxon>
        <taxon>Stutzerimonas</taxon>
    </lineage>
</organism>
<dbReference type="EC" id="3.4.24.-" evidence="1"/>
<dbReference type="EMBL" id="CP000304">
    <property type="protein sequence ID" value="ABP80189.1"/>
    <property type="molecule type" value="Genomic_DNA"/>
</dbReference>
<dbReference type="RefSeq" id="WP_011913651.1">
    <property type="nucleotide sequence ID" value="NC_009434.1"/>
</dbReference>
<dbReference type="MEROPS" id="M48.002"/>
<dbReference type="KEGG" id="psa:PST_2539"/>
<dbReference type="eggNOG" id="COG0501">
    <property type="taxonomic scope" value="Bacteria"/>
</dbReference>
<dbReference type="HOGENOM" id="CLU_042266_1_0_6"/>
<dbReference type="Proteomes" id="UP000000233">
    <property type="component" value="Chromosome"/>
</dbReference>
<dbReference type="GO" id="GO:0005886">
    <property type="term" value="C:plasma membrane"/>
    <property type="evidence" value="ECO:0007669"/>
    <property type="project" value="UniProtKB-SubCell"/>
</dbReference>
<dbReference type="GO" id="GO:0004222">
    <property type="term" value="F:metalloendopeptidase activity"/>
    <property type="evidence" value="ECO:0007669"/>
    <property type="project" value="UniProtKB-UniRule"/>
</dbReference>
<dbReference type="GO" id="GO:0008270">
    <property type="term" value="F:zinc ion binding"/>
    <property type="evidence" value="ECO:0007669"/>
    <property type="project" value="UniProtKB-UniRule"/>
</dbReference>
<dbReference type="GO" id="GO:0006508">
    <property type="term" value="P:proteolysis"/>
    <property type="evidence" value="ECO:0007669"/>
    <property type="project" value="UniProtKB-KW"/>
</dbReference>
<dbReference type="CDD" id="cd07335">
    <property type="entry name" value="M48B_HtpX_like"/>
    <property type="match status" value="1"/>
</dbReference>
<dbReference type="Gene3D" id="3.30.2010.10">
    <property type="entry name" value="Metalloproteases ('zincins'), catalytic domain"/>
    <property type="match status" value="1"/>
</dbReference>
<dbReference type="HAMAP" id="MF_00188">
    <property type="entry name" value="Pept_M48_protease_HtpX"/>
    <property type="match status" value="1"/>
</dbReference>
<dbReference type="InterPro" id="IPR050083">
    <property type="entry name" value="HtpX_protease"/>
</dbReference>
<dbReference type="InterPro" id="IPR022919">
    <property type="entry name" value="Pept_M48_protease_HtpX"/>
</dbReference>
<dbReference type="InterPro" id="IPR001915">
    <property type="entry name" value="Peptidase_M48"/>
</dbReference>
<dbReference type="NCBIfam" id="NF003965">
    <property type="entry name" value="PRK05457.1"/>
    <property type="match status" value="1"/>
</dbReference>
<dbReference type="PANTHER" id="PTHR43221">
    <property type="entry name" value="PROTEASE HTPX"/>
    <property type="match status" value="1"/>
</dbReference>
<dbReference type="PANTHER" id="PTHR43221:SF1">
    <property type="entry name" value="PROTEASE HTPX"/>
    <property type="match status" value="1"/>
</dbReference>
<dbReference type="Pfam" id="PF01435">
    <property type="entry name" value="Peptidase_M48"/>
    <property type="match status" value="1"/>
</dbReference>
<comment type="cofactor">
    <cofactor evidence="1">
        <name>Zn(2+)</name>
        <dbReference type="ChEBI" id="CHEBI:29105"/>
    </cofactor>
    <text evidence="1">Binds 1 zinc ion per subunit.</text>
</comment>
<comment type="subcellular location">
    <subcellularLocation>
        <location evidence="1">Cell inner membrane</location>
        <topology evidence="1">Multi-pass membrane protein</topology>
    </subcellularLocation>
</comment>
<comment type="similarity">
    <text evidence="1">Belongs to the peptidase M48B family.</text>
</comment>
<protein>
    <recommendedName>
        <fullName evidence="1">Protease HtpX</fullName>
        <ecNumber evidence="1">3.4.24.-</ecNumber>
    </recommendedName>
    <alternativeName>
        <fullName evidence="1">Heat shock protein HtpX</fullName>
    </alternativeName>
</protein>
<feature type="chain" id="PRO_1000020918" description="Protease HtpX">
    <location>
        <begin position="1"/>
        <end position="290"/>
    </location>
</feature>
<feature type="transmembrane region" description="Helical" evidence="1">
    <location>
        <begin position="4"/>
        <end position="24"/>
    </location>
</feature>
<feature type="transmembrane region" description="Helical" evidence="1">
    <location>
        <begin position="36"/>
        <end position="56"/>
    </location>
</feature>
<feature type="transmembrane region" description="Helical" evidence="1">
    <location>
        <begin position="150"/>
        <end position="170"/>
    </location>
</feature>
<feature type="transmembrane region" description="Helical" evidence="1">
    <location>
        <begin position="193"/>
        <end position="213"/>
    </location>
</feature>
<feature type="active site" evidence="1">
    <location>
        <position position="143"/>
    </location>
</feature>
<feature type="binding site" evidence="1">
    <location>
        <position position="142"/>
    </location>
    <ligand>
        <name>Zn(2+)</name>
        <dbReference type="ChEBI" id="CHEBI:29105"/>
        <note>catalytic</note>
    </ligand>
</feature>
<feature type="binding site" evidence="1">
    <location>
        <position position="146"/>
    </location>
    <ligand>
        <name>Zn(2+)</name>
        <dbReference type="ChEBI" id="CHEBI:29105"/>
        <note>catalytic</note>
    </ligand>
</feature>
<feature type="binding site" evidence="1">
    <location>
        <position position="219"/>
    </location>
    <ligand>
        <name>Zn(2+)</name>
        <dbReference type="ChEBI" id="CHEBI:29105"/>
        <note>catalytic</note>
    </ligand>
</feature>
<proteinExistence type="inferred from homology"/>
<gene>
    <name evidence="1" type="primary">htpX</name>
    <name type="ordered locus">PST_2539</name>
</gene>
<accession>A4VMI8</accession>
<sequence>MMRIFLFLATNLAVLVIASITLKLLGVDRYTGQNYGSLLVFCAVFGFAGSLISLFISKWMAKMSTRTEIISQPRTRHEQWLLQTVEQLSREAGIKMPEVGIFPAYEANAFATGWNRNDALVAVSQGLLERFSPDEVRAVLAHEIGHVANGDMVTLALIQGVVNTFVMFFARIFGNFVDKAILKNEDGHGIGYFVATIFAELVLGILASIIVMWFSRKREYRADEAGAQLAGTSAMIGALQRLRAEQGLPVHMPDSLKAFGINGSLKHGMAGLFMTHPSLEDRIEALRQRG</sequence>